<sequence>MFDQTTHTEVHPLTVGKIETASGAIKPQLLRDAVKRAVTNFFAQMDGQEAEEVYEMVLSEVEAPLLDIIMQHTRGNQTRAANMLGINRGTLRKKLKKYGMN</sequence>
<keyword id="KW-0010">Activator</keyword>
<keyword id="KW-0238">DNA-binding</keyword>
<keyword id="KW-0804">Transcription</keyword>
<keyword id="KW-0805">Transcription regulation</keyword>
<protein>
    <recommendedName>
        <fullName evidence="1">DNA-binding protein Fis</fullName>
    </recommendedName>
</protein>
<evidence type="ECO:0000255" key="1">
    <source>
        <dbReference type="HAMAP-Rule" id="MF_00166"/>
    </source>
</evidence>
<gene>
    <name evidence="1" type="primary">fis</name>
    <name type="ordered locus">swp_0425</name>
</gene>
<reference key="1">
    <citation type="journal article" date="2008" name="PLoS ONE">
        <title>Environmental adaptation: genomic analysis of the piezotolerant and psychrotolerant deep-sea iron reducing bacterium Shewanella piezotolerans WP3.</title>
        <authorList>
            <person name="Wang F."/>
            <person name="Wang J."/>
            <person name="Jian H."/>
            <person name="Zhang B."/>
            <person name="Li S."/>
            <person name="Wang F."/>
            <person name="Zeng X."/>
            <person name="Gao L."/>
            <person name="Bartlett D.H."/>
            <person name="Yu J."/>
            <person name="Hu S."/>
            <person name="Xiao X."/>
        </authorList>
    </citation>
    <scope>NUCLEOTIDE SEQUENCE [LARGE SCALE GENOMIC DNA]</scope>
    <source>
        <strain>WP3 / JCM 13877</strain>
    </source>
</reference>
<comment type="function">
    <text evidence="1">Activates ribosomal RNA transcription. Plays a direct role in upstream activation of rRNA promoters.</text>
</comment>
<comment type="subunit">
    <text evidence="1">Homodimer.</text>
</comment>
<comment type="similarity">
    <text evidence="1">Belongs to the transcriptional regulatory Fis family.</text>
</comment>
<dbReference type="EMBL" id="CP000472">
    <property type="protein sequence ID" value="ACJ27257.1"/>
    <property type="molecule type" value="Genomic_DNA"/>
</dbReference>
<dbReference type="RefSeq" id="WP_012153658.1">
    <property type="nucleotide sequence ID" value="NC_011566.1"/>
</dbReference>
<dbReference type="SMR" id="B8CHY1"/>
<dbReference type="STRING" id="225849.swp_0425"/>
<dbReference type="KEGG" id="swp:swp_0425"/>
<dbReference type="eggNOG" id="COG2901">
    <property type="taxonomic scope" value="Bacteria"/>
</dbReference>
<dbReference type="HOGENOM" id="CLU_158040_3_3_6"/>
<dbReference type="OrthoDB" id="9802388at2"/>
<dbReference type="Proteomes" id="UP000000753">
    <property type="component" value="Chromosome"/>
</dbReference>
<dbReference type="GO" id="GO:0003700">
    <property type="term" value="F:DNA-binding transcription factor activity"/>
    <property type="evidence" value="ECO:0007669"/>
    <property type="project" value="UniProtKB-UniRule"/>
</dbReference>
<dbReference type="GO" id="GO:0043565">
    <property type="term" value="F:sequence-specific DNA binding"/>
    <property type="evidence" value="ECO:0007669"/>
    <property type="project" value="InterPro"/>
</dbReference>
<dbReference type="FunFam" id="1.10.10.60:FF:000006">
    <property type="entry name" value="DNA-binding protein Fis"/>
    <property type="match status" value="1"/>
</dbReference>
<dbReference type="Gene3D" id="1.10.10.60">
    <property type="entry name" value="Homeodomain-like"/>
    <property type="match status" value="1"/>
</dbReference>
<dbReference type="HAMAP" id="MF_00166">
    <property type="entry name" value="DNA_binding_Fis"/>
    <property type="match status" value="1"/>
</dbReference>
<dbReference type="InterPro" id="IPR005412">
    <property type="entry name" value="Fis_DNA-bd"/>
</dbReference>
<dbReference type="InterPro" id="IPR009057">
    <property type="entry name" value="Homeodomain-like_sf"/>
</dbReference>
<dbReference type="InterPro" id="IPR002197">
    <property type="entry name" value="HTH_Fis"/>
</dbReference>
<dbReference type="InterPro" id="IPR050207">
    <property type="entry name" value="Trans_regulatory_Fis"/>
</dbReference>
<dbReference type="NCBIfam" id="NF001659">
    <property type="entry name" value="PRK00430.1"/>
    <property type="match status" value="1"/>
</dbReference>
<dbReference type="PANTHER" id="PTHR47918">
    <property type="entry name" value="DNA-BINDING PROTEIN FIS"/>
    <property type="match status" value="1"/>
</dbReference>
<dbReference type="PANTHER" id="PTHR47918:SF1">
    <property type="entry name" value="DNA-BINDING PROTEIN FIS"/>
    <property type="match status" value="1"/>
</dbReference>
<dbReference type="Pfam" id="PF02954">
    <property type="entry name" value="HTH_8"/>
    <property type="match status" value="1"/>
</dbReference>
<dbReference type="PIRSF" id="PIRSF002097">
    <property type="entry name" value="DNA-binding_Fis"/>
    <property type="match status" value="1"/>
</dbReference>
<dbReference type="PRINTS" id="PR01591">
    <property type="entry name" value="DNABINDNGFIS"/>
</dbReference>
<dbReference type="PRINTS" id="PR01590">
    <property type="entry name" value="HTHFIS"/>
</dbReference>
<dbReference type="SUPFAM" id="SSF46689">
    <property type="entry name" value="Homeodomain-like"/>
    <property type="match status" value="1"/>
</dbReference>
<organism>
    <name type="scientific">Shewanella piezotolerans (strain WP3 / JCM 13877)</name>
    <dbReference type="NCBI Taxonomy" id="225849"/>
    <lineage>
        <taxon>Bacteria</taxon>
        <taxon>Pseudomonadati</taxon>
        <taxon>Pseudomonadota</taxon>
        <taxon>Gammaproteobacteria</taxon>
        <taxon>Alteromonadales</taxon>
        <taxon>Shewanellaceae</taxon>
        <taxon>Shewanella</taxon>
    </lineage>
</organism>
<accession>B8CHY1</accession>
<feature type="chain" id="PRO_1000118227" description="DNA-binding protein Fis">
    <location>
        <begin position="1"/>
        <end position="101"/>
    </location>
</feature>
<feature type="DNA-binding region" description="H-T-H motif" evidence="1">
    <location>
        <begin position="77"/>
        <end position="96"/>
    </location>
</feature>
<name>FIS_SHEPW</name>
<proteinExistence type="inferred from homology"/>